<organism>
    <name type="scientific">Photorhabdus laumondii subsp. laumondii (strain DSM 15139 / CIP 105565 / TT01)</name>
    <name type="common">Photorhabdus luminescens subsp. laumondii</name>
    <dbReference type="NCBI Taxonomy" id="243265"/>
    <lineage>
        <taxon>Bacteria</taxon>
        <taxon>Pseudomonadati</taxon>
        <taxon>Pseudomonadota</taxon>
        <taxon>Gammaproteobacteria</taxon>
        <taxon>Enterobacterales</taxon>
        <taxon>Morganellaceae</taxon>
        <taxon>Photorhabdus</taxon>
    </lineage>
</organism>
<name>ACKA_PHOLL</name>
<comment type="function">
    <text evidence="1">Catalyzes the formation of acetyl phosphate from acetate and ATP. Can also catalyze the reverse reaction.</text>
</comment>
<comment type="catalytic activity">
    <reaction evidence="1">
        <text>acetate + ATP = acetyl phosphate + ADP</text>
        <dbReference type="Rhea" id="RHEA:11352"/>
        <dbReference type="ChEBI" id="CHEBI:22191"/>
        <dbReference type="ChEBI" id="CHEBI:30089"/>
        <dbReference type="ChEBI" id="CHEBI:30616"/>
        <dbReference type="ChEBI" id="CHEBI:456216"/>
        <dbReference type="EC" id="2.7.2.1"/>
    </reaction>
</comment>
<comment type="cofactor">
    <cofactor evidence="1">
        <name>Mg(2+)</name>
        <dbReference type="ChEBI" id="CHEBI:18420"/>
    </cofactor>
    <cofactor evidence="1">
        <name>Mn(2+)</name>
        <dbReference type="ChEBI" id="CHEBI:29035"/>
    </cofactor>
    <text evidence="1">Mg(2+). Can also accept Mn(2+).</text>
</comment>
<comment type="pathway">
    <text evidence="1">Metabolic intermediate biosynthesis; acetyl-CoA biosynthesis; acetyl-CoA from acetate: step 1/2.</text>
</comment>
<comment type="subunit">
    <text evidence="1">Homodimer.</text>
</comment>
<comment type="subcellular location">
    <subcellularLocation>
        <location evidence="1">Cytoplasm</location>
    </subcellularLocation>
</comment>
<comment type="similarity">
    <text evidence="1">Belongs to the acetokinase family.</text>
</comment>
<feature type="chain" id="PRO_0000107598" description="Acetate kinase">
    <location>
        <begin position="1"/>
        <end position="400"/>
    </location>
</feature>
<feature type="active site" description="Proton donor/acceptor" evidence="1">
    <location>
        <position position="150"/>
    </location>
</feature>
<feature type="binding site" evidence="1">
    <location>
        <position position="10"/>
    </location>
    <ligand>
        <name>Mg(2+)</name>
        <dbReference type="ChEBI" id="CHEBI:18420"/>
    </ligand>
</feature>
<feature type="binding site" evidence="1">
    <location>
        <position position="17"/>
    </location>
    <ligand>
        <name>ATP</name>
        <dbReference type="ChEBI" id="CHEBI:30616"/>
    </ligand>
</feature>
<feature type="binding site" evidence="1">
    <location>
        <position position="91"/>
    </location>
    <ligand>
        <name>substrate</name>
    </ligand>
</feature>
<feature type="binding site" evidence="1">
    <location>
        <begin position="210"/>
        <end position="214"/>
    </location>
    <ligand>
        <name>ATP</name>
        <dbReference type="ChEBI" id="CHEBI:30616"/>
    </ligand>
</feature>
<feature type="binding site" evidence="1">
    <location>
        <begin position="285"/>
        <end position="287"/>
    </location>
    <ligand>
        <name>ATP</name>
        <dbReference type="ChEBI" id="CHEBI:30616"/>
    </ligand>
</feature>
<feature type="binding site" evidence="1">
    <location>
        <begin position="333"/>
        <end position="337"/>
    </location>
    <ligand>
        <name>ATP</name>
        <dbReference type="ChEBI" id="CHEBI:30616"/>
    </ligand>
</feature>
<feature type="binding site" evidence="1">
    <location>
        <position position="387"/>
    </location>
    <ligand>
        <name>Mg(2+)</name>
        <dbReference type="ChEBI" id="CHEBI:18420"/>
    </ligand>
</feature>
<feature type="site" description="Transition state stabilizer" evidence="1">
    <location>
        <position position="182"/>
    </location>
</feature>
<feature type="site" description="Transition state stabilizer" evidence="1">
    <location>
        <position position="243"/>
    </location>
</feature>
<dbReference type="EC" id="2.7.2.1" evidence="1"/>
<dbReference type="EMBL" id="BX571869">
    <property type="protein sequence ID" value="CAE15469.1"/>
    <property type="molecule type" value="Genomic_DNA"/>
</dbReference>
<dbReference type="RefSeq" id="WP_011147312.1">
    <property type="nucleotide sequence ID" value="NC_005126.1"/>
</dbReference>
<dbReference type="SMR" id="Q7N2I1"/>
<dbReference type="STRING" id="243265.plu3095"/>
<dbReference type="GeneID" id="48849356"/>
<dbReference type="KEGG" id="plu:plu3095"/>
<dbReference type="eggNOG" id="COG0282">
    <property type="taxonomic scope" value="Bacteria"/>
</dbReference>
<dbReference type="HOGENOM" id="CLU_020352_0_1_6"/>
<dbReference type="OrthoDB" id="9802453at2"/>
<dbReference type="UniPathway" id="UPA00340">
    <property type="reaction ID" value="UER00458"/>
</dbReference>
<dbReference type="Proteomes" id="UP000002514">
    <property type="component" value="Chromosome"/>
</dbReference>
<dbReference type="GO" id="GO:0005829">
    <property type="term" value="C:cytosol"/>
    <property type="evidence" value="ECO:0007669"/>
    <property type="project" value="TreeGrafter"/>
</dbReference>
<dbReference type="GO" id="GO:0008776">
    <property type="term" value="F:acetate kinase activity"/>
    <property type="evidence" value="ECO:0007669"/>
    <property type="project" value="UniProtKB-UniRule"/>
</dbReference>
<dbReference type="GO" id="GO:0005524">
    <property type="term" value="F:ATP binding"/>
    <property type="evidence" value="ECO:0007669"/>
    <property type="project" value="UniProtKB-KW"/>
</dbReference>
<dbReference type="GO" id="GO:0000287">
    <property type="term" value="F:magnesium ion binding"/>
    <property type="evidence" value="ECO:0007669"/>
    <property type="project" value="UniProtKB-UniRule"/>
</dbReference>
<dbReference type="GO" id="GO:0006083">
    <property type="term" value="P:acetate metabolic process"/>
    <property type="evidence" value="ECO:0007669"/>
    <property type="project" value="TreeGrafter"/>
</dbReference>
<dbReference type="GO" id="GO:0006085">
    <property type="term" value="P:acetyl-CoA biosynthetic process"/>
    <property type="evidence" value="ECO:0007669"/>
    <property type="project" value="UniProtKB-UniRule"/>
</dbReference>
<dbReference type="CDD" id="cd24010">
    <property type="entry name" value="ASKHA_NBD_AcK_PK"/>
    <property type="match status" value="1"/>
</dbReference>
<dbReference type="FunFam" id="3.30.420.40:FF:000041">
    <property type="entry name" value="Acetate kinase"/>
    <property type="match status" value="1"/>
</dbReference>
<dbReference type="FunFam" id="3.30.420.40:FF:000042">
    <property type="entry name" value="Acetate kinase"/>
    <property type="match status" value="1"/>
</dbReference>
<dbReference type="Gene3D" id="3.30.420.40">
    <property type="match status" value="2"/>
</dbReference>
<dbReference type="HAMAP" id="MF_00020">
    <property type="entry name" value="Acetate_kinase"/>
    <property type="match status" value="1"/>
</dbReference>
<dbReference type="InterPro" id="IPR004372">
    <property type="entry name" value="Ac/propionate_kinase"/>
</dbReference>
<dbReference type="InterPro" id="IPR000890">
    <property type="entry name" value="Aliphatic_acid_kin_short-chain"/>
</dbReference>
<dbReference type="InterPro" id="IPR023865">
    <property type="entry name" value="Aliphatic_acid_kinase_CS"/>
</dbReference>
<dbReference type="InterPro" id="IPR043129">
    <property type="entry name" value="ATPase_NBD"/>
</dbReference>
<dbReference type="NCBIfam" id="TIGR00016">
    <property type="entry name" value="ackA"/>
    <property type="match status" value="1"/>
</dbReference>
<dbReference type="PANTHER" id="PTHR21060">
    <property type="entry name" value="ACETATE KINASE"/>
    <property type="match status" value="1"/>
</dbReference>
<dbReference type="PANTHER" id="PTHR21060:SF21">
    <property type="entry name" value="ACETATE KINASE"/>
    <property type="match status" value="1"/>
</dbReference>
<dbReference type="Pfam" id="PF00871">
    <property type="entry name" value="Acetate_kinase"/>
    <property type="match status" value="1"/>
</dbReference>
<dbReference type="PIRSF" id="PIRSF000722">
    <property type="entry name" value="Acetate_prop_kin"/>
    <property type="match status" value="1"/>
</dbReference>
<dbReference type="PRINTS" id="PR00471">
    <property type="entry name" value="ACETATEKNASE"/>
</dbReference>
<dbReference type="SUPFAM" id="SSF53067">
    <property type="entry name" value="Actin-like ATPase domain"/>
    <property type="match status" value="2"/>
</dbReference>
<dbReference type="PROSITE" id="PS01075">
    <property type="entry name" value="ACETATE_KINASE_1"/>
    <property type="match status" value="1"/>
</dbReference>
<dbReference type="PROSITE" id="PS01076">
    <property type="entry name" value="ACETATE_KINASE_2"/>
    <property type="match status" value="1"/>
</dbReference>
<gene>
    <name evidence="1" type="primary">ackA</name>
    <name type="ordered locus">plu3095</name>
</gene>
<proteinExistence type="inferred from homology"/>
<protein>
    <recommendedName>
        <fullName evidence="1">Acetate kinase</fullName>
        <ecNumber evidence="1">2.7.2.1</ecNumber>
    </recommendedName>
    <alternativeName>
        <fullName evidence="1">Acetokinase</fullName>
    </alternativeName>
</protein>
<reference key="1">
    <citation type="journal article" date="2003" name="Nat. Biotechnol.">
        <title>The genome sequence of the entomopathogenic bacterium Photorhabdus luminescens.</title>
        <authorList>
            <person name="Duchaud E."/>
            <person name="Rusniok C."/>
            <person name="Frangeul L."/>
            <person name="Buchrieser C."/>
            <person name="Givaudan A."/>
            <person name="Taourit S."/>
            <person name="Bocs S."/>
            <person name="Boursaux-Eude C."/>
            <person name="Chandler M."/>
            <person name="Charles J.-F."/>
            <person name="Dassa E."/>
            <person name="Derose R."/>
            <person name="Derzelle S."/>
            <person name="Freyssinet G."/>
            <person name="Gaudriault S."/>
            <person name="Medigue C."/>
            <person name="Lanois A."/>
            <person name="Powell K."/>
            <person name="Siguier P."/>
            <person name="Vincent R."/>
            <person name="Wingate V."/>
            <person name="Zouine M."/>
            <person name="Glaser P."/>
            <person name="Boemare N."/>
            <person name="Danchin A."/>
            <person name="Kunst F."/>
        </authorList>
    </citation>
    <scope>NUCLEOTIDE SEQUENCE [LARGE SCALE GENOMIC DNA]</scope>
    <source>
        <strain>DSM 15139 / CIP 105565 / TT01</strain>
    </source>
</reference>
<sequence>MSSKLVLVLNCGSSSLKFAIIDPANGEEYLSGLAECFNLPEARIKWKMDGAKHEAALGAGAAHSEALNFIVNTILAEKPELSDQIAAIGHRIVHGGEKFTASVTINDEVIQGIKDAVPFAPLHNPAHLIGIEEAKKGFPHLADKNVAVFDTAFHQTMPEEAYLYALPYNLYKEHGIRRYGAHGTSHFFVSREAAKTLNKPVEELNVIVCHLGNGGSISAIVNGQCVDTSMGLTPLEGLVMGTRSGDIDPAIIFHLHDSLGMSVEQINKLLTKESGLLGLTEVTSDCRYIEDNYATKADAKRAMDVYCHRLAKYVGAYSALMEGRLDAIIFTGGIGENSALVREQVMKKLALLGFEYDHDRNLAARFGKSGAITTDNSRPALVIPTNEELVIAQDAARLTA</sequence>
<evidence type="ECO:0000255" key="1">
    <source>
        <dbReference type="HAMAP-Rule" id="MF_00020"/>
    </source>
</evidence>
<accession>Q7N2I1</accession>
<keyword id="KW-0067">ATP-binding</keyword>
<keyword id="KW-0963">Cytoplasm</keyword>
<keyword id="KW-0418">Kinase</keyword>
<keyword id="KW-0460">Magnesium</keyword>
<keyword id="KW-0479">Metal-binding</keyword>
<keyword id="KW-0547">Nucleotide-binding</keyword>
<keyword id="KW-1185">Reference proteome</keyword>
<keyword id="KW-0808">Transferase</keyword>